<protein>
    <recommendedName>
        <fullName evidence="5">Methyltransferase phomM'</fullName>
        <ecNumber evidence="3">2.1.1.-</ecNumber>
    </recommendedName>
    <alternativeName>
        <fullName evidence="5">Phomopsin biosynthesis cluster protein M'</fullName>
    </alternativeName>
</protein>
<accession>A0A142I733</accession>
<keyword id="KW-0489">Methyltransferase</keyword>
<keyword id="KW-0949">S-adenosyl-L-methionine</keyword>
<keyword id="KW-0808">Transferase</keyword>
<comment type="function">
    <text evidence="2 3 7">Methyltransferase; part of the gene cluster that mediates the biosynthesis of the phomopsins, a group of hexapeptide mycotoxins which infects lupins and causes lupinosis disease in livestock (PubMed:26979951, PubMed:34608734). Within the pathway, phomM' acts as an S-adenosylmethionine-dependent alpha-N-methyltransferase that catalyzes two successive N-methylation reactions, converting N-desmethyl-phomopsin A to phomopsin A and phomopsin A further to an N,N-dimethylated congener called phomopsin E (PubMed:26979951, PubMed:34608734). The pathway starts with the processing of the precursor phomA' by several endopeptidases including kexin proteases as well as the cluster-specific S41 family peptidase phomP1 and the oligopeptidase phomG' to produce 10 identical copies of the hexapeptide Tyr-Val-Ile-Pro-Ile-Asp. After being excised from the precursor peptide, the core peptides are cyclized and modified post-translationally by enzymes encoded within the gene cluster. The timing and order of proteolysis of the phomA' precursor and PTMs are still unknown. Two tyrosinase-like enzymes, phomQ1' and phomQ2, catalyze the chlorination and hydroxylation of Tyr, respectively. PhomYb, is proposed to be involved in the construction of the macrocyclic structure. The other 4 ustYa family proteins may be involved in PTMs that generate the unique structure of phomopsin A. PhomYa' is required for the hydroxylation of C-beta of Tyr. PhomYc', phomYd', and phomYe are responsible for the biosynthesis of 2,3-dehydroisoleucine (dIle), 2,3-dehydroaspartic acid (dAsp), and 3,4-dehydroproline (dPro), respectively. While dIle formation by phomYc' is indispensable for the installation of dAsp by phomYd', the order of the other PTMs have not been elucidated yet. Most of the biosynthetic enzymes likely have broad substrate specificity, and thus, there might be a metabolic grid from a precursor to phomopsin A. The enzyme(s) responsible for the biosynthesis of 3,4-dehydrovaline (dVal) have also not been identified yet. Finally, phomM' acts as an S-adenosylmethionine-dependent alpha-N-methyltransferase that catalyzes two successive N-methylation reactions, converting N-desmethyl-phomopsin A to phomopsin A and phomopsin A further to an N,N-dimethylated congener called phomopsin E (Probable).</text>
</comment>
<comment type="pathway">
    <text evidence="2">Mycotoxin biosynthesis.</text>
</comment>
<comment type="similarity">
    <text evidence="6">Belongs to the class I-like SAM-binding methyltransferase superfamily. Erg6/SMT family.</text>
</comment>
<evidence type="ECO:0000255" key="1"/>
<evidence type="ECO:0000269" key="2">
    <source>
    </source>
</evidence>
<evidence type="ECO:0000269" key="3">
    <source>
    </source>
</evidence>
<evidence type="ECO:0000303" key="4">
    <source>
    </source>
</evidence>
<evidence type="ECO:0000303" key="5">
    <source>
    </source>
</evidence>
<evidence type="ECO:0000305" key="6"/>
<evidence type="ECO:0000305" key="7">
    <source>
    </source>
</evidence>
<proteinExistence type="evidence at protein level"/>
<reference key="1">
    <citation type="journal article" date="2016" name="Proc. Natl. Acad. Sci. U.S.A.">
        <title>Biosynthetic investigation of phomopsins reveals a widespread pathway for ribosomal natural products in Ascomycetes.</title>
        <authorList>
            <person name="Ding W."/>
            <person name="Liu W.Q."/>
            <person name="Jia Y."/>
            <person name="Li Y."/>
            <person name="van der Donk W.A."/>
            <person name="Zhang Q."/>
        </authorList>
    </citation>
    <scope>NUCLEOTIDE SEQUENCE [GENOMIC DNA]</scope>
    <scope>FUNCTION</scope>
    <scope>CATALYTIC ACTIVITY</scope>
    <scope>PATHWAY</scope>
    <source>
        <strain>ATCC 26115 / IMI 115107 / C 1557</strain>
    </source>
</reference>
<reference key="2">
    <citation type="journal article" date="2021" name="Angew. Chem. Int. Ed.">
        <title>Biosynthetic studies of phomopsins unveil posttranslational installation of dehydroamino acids by ustYa family proteins.</title>
        <authorList>
            <person name="Sogahata K."/>
            <person name="Ozaki T."/>
            <person name="Igarashi Y."/>
            <person name="Naganuma Y."/>
            <person name="Liu C."/>
            <person name="Minami A."/>
            <person name="Oikawa H."/>
        </authorList>
    </citation>
    <scope>NOMENCLATURE</scope>
    <scope>FUNCTION</scope>
    <source>
        <strain>ATCC 26115 / IMI 115107 / C 1557</strain>
    </source>
</reference>
<gene>
    <name evidence="5" type="primary">phomM'</name>
    <name evidence="4" type="synonym">phomM</name>
</gene>
<feature type="chain" id="PRO_0000458347" description="Methyltransferase phomM'">
    <location>
        <begin position="1"/>
        <end position="387"/>
    </location>
</feature>
<feature type="region of interest" description="Methyltransferase domain" evidence="1">
    <location>
        <begin position="98"/>
        <end position="223"/>
    </location>
</feature>
<sequence>MASVTITSVHEPANPLAVAHTGEREVEGDQLIKTDTNNDNDIINTLLNNFLYPQELKHNVFVPRFQQRITIVKAWDILSLSTSPPNGTNGANGTNSAPHRPKDLHILDIGCGQGESAATMAALLQPHMHGARLHITGIDTARPDYGTPYTVAETHAHLTASALGRHISFRREDAAAFFSPSRLSSPSPPGSWPSAANVDAVTLCHSLWYFPTPQSVADLFTTLAGARVPRVYLAEYSFRGSLPGGQQDAHILAARAQALLHASVLEKLSADSSQQNHQGREPGPRAPNVRAALDVGSIVEAAAAAGWAVRRQGTFVPAADMIEGHLEARLVVKDAFAEAVRAEGLSPEREHEVLGLVPGVKEAFARLAEAGVAKGRAMDVWWAELER</sequence>
<dbReference type="EC" id="2.1.1.-" evidence="3"/>
<dbReference type="EMBL" id="KU645837">
    <property type="protein sequence ID" value="AMR44285.1"/>
    <property type="molecule type" value="Genomic_DNA"/>
</dbReference>
<dbReference type="GO" id="GO:0008168">
    <property type="term" value="F:methyltransferase activity"/>
    <property type="evidence" value="ECO:0007669"/>
    <property type="project" value="UniProtKB-KW"/>
</dbReference>
<dbReference type="GO" id="GO:0032259">
    <property type="term" value="P:methylation"/>
    <property type="evidence" value="ECO:0007669"/>
    <property type="project" value="UniProtKB-KW"/>
</dbReference>
<dbReference type="Gene3D" id="3.40.50.150">
    <property type="entry name" value="Vaccinia Virus protein VP39"/>
    <property type="match status" value="1"/>
</dbReference>
<dbReference type="InterPro" id="IPR029063">
    <property type="entry name" value="SAM-dependent_MTases_sf"/>
</dbReference>
<dbReference type="SUPFAM" id="SSF53335">
    <property type="entry name" value="S-adenosyl-L-methionine-dependent methyltransferases"/>
    <property type="match status" value="1"/>
</dbReference>
<organism>
    <name type="scientific">Diaporthe leptostromiformis</name>
    <name type="common">Lupinosis disease fungus</name>
    <name type="synonym">Phomopsis leptostromiformis</name>
    <dbReference type="NCBI Taxonomy" id="291059"/>
    <lineage>
        <taxon>Eukaryota</taxon>
        <taxon>Fungi</taxon>
        <taxon>Dikarya</taxon>
        <taxon>Ascomycota</taxon>
        <taxon>Pezizomycotina</taxon>
        <taxon>Sordariomycetes</taxon>
        <taxon>Sordariomycetidae</taxon>
        <taxon>Diaporthales</taxon>
        <taxon>Diaporthaceae</taxon>
        <taxon>Diaporthe</taxon>
    </lineage>
</organism>
<name>PHOM2_DIALO</name>